<reference key="1">
    <citation type="journal article" date="2009" name="Infect. Immun.">
        <title>Comparative genomics reveal extensive transposon-mediated genomic plasticity and diversity among potential effector proteins within the genus Coxiella.</title>
        <authorList>
            <person name="Beare P.A."/>
            <person name="Unsworth N."/>
            <person name="Andoh M."/>
            <person name="Voth D.E."/>
            <person name="Omsland A."/>
            <person name="Gilk S.D."/>
            <person name="Williams K.P."/>
            <person name="Sobral B.W."/>
            <person name="Kupko J.J. III"/>
            <person name="Porcella S.F."/>
            <person name="Samuel J.E."/>
            <person name="Heinzen R.A."/>
        </authorList>
    </citation>
    <scope>NUCLEOTIDE SEQUENCE [LARGE SCALE GENOMIC DNA]</scope>
    <source>
        <strain>CbuK_Q154</strain>
    </source>
</reference>
<proteinExistence type="inferred from homology"/>
<evidence type="ECO:0000255" key="1">
    <source>
        <dbReference type="HAMAP-Rule" id="MF_00539"/>
    </source>
</evidence>
<evidence type="ECO:0000256" key="2">
    <source>
        <dbReference type="SAM" id="MobiDB-lite"/>
    </source>
</evidence>
<evidence type="ECO:0000305" key="3"/>
<keyword id="KW-0687">Ribonucleoprotein</keyword>
<keyword id="KW-0689">Ribosomal protein</keyword>
<dbReference type="EMBL" id="CP001020">
    <property type="protein sequence ID" value="ACJ20817.1"/>
    <property type="molecule type" value="Genomic_DNA"/>
</dbReference>
<dbReference type="RefSeq" id="WP_005771977.1">
    <property type="nucleotide sequence ID" value="NC_011528.1"/>
</dbReference>
<dbReference type="SMR" id="B6J9K3"/>
<dbReference type="KEGG" id="cbc:CbuK_1676"/>
<dbReference type="HOGENOM" id="CLU_095424_4_1_6"/>
<dbReference type="GO" id="GO:0022625">
    <property type="term" value="C:cytosolic large ribosomal subunit"/>
    <property type="evidence" value="ECO:0007669"/>
    <property type="project" value="TreeGrafter"/>
</dbReference>
<dbReference type="GO" id="GO:0003735">
    <property type="term" value="F:structural constituent of ribosome"/>
    <property type="evidence" value="ECO:0007669"/>
    <property type="project" value="InterPro"/>
</dbReference>
<dbReference type="GO" id="GO:0006412">
    <property type="term" value="P:translation"/>
    <property type="evidence" value="ECO:0007669"/>
    <property type="project" value="UniProtKB-UniRule"/>
</dbReference>
<dbReference type="FunFam" id="2.40.50.100:FF:000001">
    <property type="entry name" value="50S ribosomal protein L27"/>
    <property type="match status" value="1"/>
</dbReference>
<dbReference type="Gene3D" id="2.40.50.100">
    <property type="match status" value="1"/>
</dbReference>
<dbReference type="HAMAP" id="MF_00539">
    <property type="entry name" value="Ribosomal_bL27"/>
    <property type="match status" value="1"/>
</dbReference>
<dbReference type="InterPro" id="IPR001684">
    <property type="entry name" value="Ribosomal_bL27"/>
</dbReference>
<dbReference type="InterPro" id="IPR018261">
    <property type="entry name" value="Ribosomal_bL27_CS"/>
</dbReference>
<dbReference type="NCBIfam" id="TIGR00062">
    <property type="entry name" value="L27"/>
    <property type="match status" value="1"/>
</dbReference>
<dbReference type="PANTHER" id="PTHR15893:SF0">
    <property type="entry name" value="LARGE RIBOSOMAL SUBUNIT PROTEIN BL27M"/>
    <property type="match status" value="1"/>
</dbReference>
<dbReference type="PANTHER" id="PTHR15893">
    <property type="entry name" value="RIBOSOMAL PROTEIN L27"/>
    <property type="match status" value="1"/>
</dbReference>
<dbReference type="Pfam" id="PF01016">
    <property type="entry name" value="Ribosomal_L27"/>
    <property type="match status" value="1"/>
</dbReference>
<dbReference type="PRINTS" id="PR00063">
    <property type="entry name" value="RIBOSOMALL27"/>
</dbReference>
<dbReference type="SUPFAM" id="SSF110324">
    <property type="entry name" value="Ribosomal L27 protein-like"/>
    <property type="match status" value="1"/>
</dbReference>
<dbReference type="PROSITE" id="PS00831">
    <property type="entry name" value="RIBOSOMAL_L27"/>
    <property type="match status" value="1"/>
</dbReference>
<comment type="similarity">
    <text evidence="1">Belongs to the bacterial ribosomal protein bL27 family.</text>
</comment>
<name>RL27_COXB1</name>
<sequence>MAHKKAGGSTRNGRDSNPKMLGVKRFGGERVLAGNIIVRQRGTHYRPGENMGMGRDHTLYALIEGKVKFTRKGPKKRNFVSIEPLEESQP</sequence>
<protein>
    <recommendedName>
        <fullName evidence="1">Large ribosomal subunit protein bL27</fullName>
    </recommendedName>
    <alternativeName>
        <fullName evidence="3">50S ribosomal protein L27</fullName>
    </alternativeName>
</protein>
<gene>
    <name evidence="1" type="primary">rpmA</name>
    <name type="ordered locus">CbuK_1676</name>
</gene>
<organism>
    <name type="scientific">Coxiella burnetii (strain CbuK_Q154)</name>
    <name type="common">Coxiella burnetii (strain Q154)</name>
    <dbReference type="NCBI Taxonomy" id="434924"/>
    <lineage>
        <taxon>Bacteria</taxon>
        <taxon>Pseudomonadati</taxon>
        <taxon>Pseudomonadota</taxon>
        <taxon>Gammaproteobacteria</taxon>
        <taxon>Legionellales</taxon>
        <taxon>Coxiellaceae</taxon>
        <taxon>Coxiella</taxon>
    </lineage>
</organism>
<accession>B6J9K3</accession>
<feature type="chain" id="PRO_1000128727" description="Large ribosomal subunit protein bL27">
    <location>
        <begin position="1"/>
        <end position="90"/>
    </location>
</feature>
<feature type="region of interest" description="Disordered" evidence="2">
    <location>
        <begin position="1"/>
        <end position="22"/>
    </location>
</feature>